<organism>
    <name type="scientific">Pseudomonas putida (strain ATCC 47054 / DSM 6125 / CFBP 8728 / NCIMB 11950 / KT2440)</name>
    <dbReference type="NCBI Taxonomy" id="160488"/>
    <lineage>
        <taxon>Bacteria</taxon>
        <taxon>Pseudomonadati</taxon>
        <taxon>Pseudomonadota</taxon>
        <taxon>Gammaproteobacteria</taxon>
        <taxon>Pseudomonadales</taxon>
        <taxon>Pseudomonadaceae</taxon>
        <taxon>Pseudomonas</taxon>
    </lineage>
</organism>
<dbReference type="EC" id="2.3.1.191" evidence="1"/>
<dbReference type="EMBL" id="AE015451">
    <property type="protein sequence ID" value="AAN67222.1"/>
    <property type="molecule type" value="Genomic_DNA"/>
</dbReference>
<dbReference type="RefSeq" id="NP_743758.1">
    <property type="nucleotide sequence ID" value="NC_002947.4"/>
</dbReference>
<dbReference type="RefSeq" id="WP_003252312.1">
    <property type="nucleotide sequence ID" value="NZ_CP169744.1"/>
</dbReference>
<dbReference type="SMR" id="Q88MH0"/>
<dbReference type="STRING" id="160488.PP_1601"/>
<dbReference type="PaxDb" id="160488-PP_1601"/>
<dbReference type="GeneID" id="83681919"/>
<dbReference type="KEGG" id="ppu:PP_1601"/>
<dbReference type="PATRIC" id="fig|160488.4.peg.1692"/>
<dbReference type="eggNOG" id="COG1044">
    <property type="taxonomic scope" value="Bacteria"/>
</dbReference>
<dbReference type="HOGENOM" id="CLU_049865_0_1_6"/>
<dbReference type="OrthoDB" id="9784739at2"/>
<dbReference type="PhylomeDB" id="Q88MH0"/>
<dbReference type="BioCyc" id="PPUT160488:G1G01-1698-MONOMER"/>
<dbReference type="UniPathway" id="UPA00973"/>
<dbReference type="Proteomes" id="UP000000556">
    <property type="component" value="Chromosome"/>
</dbReference>
<dbReference type="GO" id="GO:0016020">
    <property type="term" value="C:membrane"/>
    <property type="evidence" value="ECO:0007669"/>
    <property type="project" value="GOC"/>
</dbReference>
<dbReference type="GO" id="GO:0016410">
    <property type="term" value="F:N-acyltransferase activity"/>
    <property type="evidence" value="ECO:0007669"/>
    <property type="project" value="InterPro"/>
</dbReference>
<dbReference type="GO" id="GO:0009245">
    <property type="term" value="P:lipid A biosynthetic process"/>
    <property type="evidence" value="ECO:0007669"/>
    <property type="project" value="UniProtKB-UniRule"/>
</dbReference>
<dbReference type="CDD" id="cd03352">
    <property type="entry name" value="LbH_LpxD"/>
    <property type="match status" value="1"/>
</dbReference>
<dbReference type="Gene3D" id="1.20.5.170">
    <property type="match status" value="1"/>
</dbReference>
<dbReference type="Gene3D" id="2.160.10.10">
    <property type="entry name" value="Hexapeptide repeat proteins"/>
    <property type="match status" value="1"/>
</dbReference>
<dbReference type="Gene3D" id="3.40.1390.10">
    <property type="entry name" value="MurE/MurF, N-terminal domain"/>
    <property type="match status" value="1"/>
</dbReference>
<dbReference type="HAMAP" id="MF_00523">
    <property type="entry name" value="LpxD"/>
    <property type="match status" value="1"/>
</dbReference>
<dbReference type="InterPro" id="IPR001451">
    <property type="entry name" value="Hexapep"/>
</dbReference>
<dbReference type="InterPro" id="IPR018357">
    <property type="entry name" value="Hexapep_transf_CS"/>
</dbReference>
<dbReference type="InterPro" id="IPR007691">
    <property type="entry name" value="LpxD"/>
</dbReference>
<dbReference type="InterPro" id="IPR011004">
    <property type="entry name" value="Trimer_LpxA-like_sf"/>
</dbReference>
<dbReference type="InterPro" id="IPR020573">
    <property type="entry name" value="UDP_GlcNAc_AcTrfase_non-rep"/>
</dbReference>
<dbReference type="NCBIfam" id="TIGR01853">
    <property type="entry name" value="lipid_A_lpxD"/>
    <property type="match status" value="1"/>
</dbReference>
<dbReference type="NCBIfam" id="NF002060">
    <property type="entry name" value="PRK00892.1"/>
    <property type="match status" value="1"/>
</dbReference>
<dbReference type="PANTHER" id="PTHR43378">
    <property type="entry name" value="UDP-3-O-ACYLGLUCOSAMINE N-ACYLTRANSFERASE"/>
    <property type="match status" value="1"/>
</dbReference>
<dbReference type="PANTHER" id="PTHR43378:SF2">
    <property type="entry name" value="UDP-3-O-ACYLGLUCOSAMINE N-ACYLTRANSFERASE 1, MITOCHONDRIAL-RELATED"/>
    <property type="match status" value="1"/>
</dbReference>
<dbReference type="Pfam" id="PF00132">
    <property type="entry name" value="Hexapep"/>
    <property type="match status" value="3"/>
</dbReference>
<dbReference type="Pfam" id="PF04613">
    <property type="entry name" value="LpxD"/>
    <property type="match status" value="1"/>
</dbReference>
<dbReference type="SUPFAM" id="SSF51161">
    <property type="entry name" value="Trimeric LpxA-like enzymes"/>
    <property type="match status" value="1"/>
</dbReference>
<dbReference type="PROSITE" id="PS00101">
    <property type="entry name" value="HEXAPEP_TRANSFERASES"/>
    <property type="match status" value="1"/>
</dbReference>
<feature type="chain" id="PRO_0000059691" description="UDP-3-O-acylglucosamine N-acyltransferase">
    <location>
        <begin position="1"/>
        <end position="351"/>
    </location>
</feature>
<feature type="active site" description="Proton acceptor" evidence="1">
    <location>
        <position position="240"/>
    </location>
</feature>
<gene>
    <name evidence="1" type="primary">lpxD</name>
    <name type="ordered locus">PP_1601</name>
</gene>
<evidence type="ECO:0000255" key="1">
    <source>
        <dbReference type="HAMAP-Rule" id="MF_00523"/>
    </source>
</evidence>
<keyword id="KW-0012">Acyltransferase</keyword>
<keyword id="KW-0441">Lipid A biosynthesis</keyword>
<keyword id="KW-0444">Lipid biosynthesis</keyword>
<keyword id="KW-0443">Lipid metabolism</keyword>
<keyword id="KW-1185">Reference proteome</keyword>
<keyword id="KW-0677">Repeat</keyword>
<keyword id="KW-0808">Transferase</keyword>
<accession>Q88MH0</accession>
<name>LPXD_PSEPK</name>
<sequence>MSVTMTLGQLAEVLGATLKGPEALQITGLATLQEAGPTQLSFLANPQYRKYLDNSQAGAVLLKAADAESFAGNTLVVADPYLAYARISHLFDPKPKAEAGIHPSAVVAEDAQVDASASIGPFAVIESGARIGANVSIGAHCFIGARCVVGEGGWLAPRVTLYHDVTIGKRVVIQSGAVIGGEGFGFANEKGIWRKIAQIGGVTIGDDVEIGVNTAVDRGALSDTRIGDGVKLDNQIQIAHNVQIGDHTAMAACVGISGSTRIGKHCMLAGGVGLVGHIDICDNVFVSGMTMVTRSITEPGSYSSGTAMQPLADWRKSAARIRHLDDMAKRLQQLEKRVDTVTSGGLPTSEG</sequence>
<reference key="1">
    <citation type="journal article" date="2002" name="Environ. Microbiol.">
        <title>Complete genome sequence and comparative analysis of the metabolically versatile Pseudomonas putida KT2440.</title>
        <authorList>
            <person name="Nelson K.E."/>
            <person name="Weinel C."/>
            <person name="Paulsen I.T."/>
            <person name="Dodson R.J."/>
            <person name="Hilbert H."/>
            <person name="Martins dos Santos V.A.P."/>
            <person name="Fouts D.E."/>
            <person name="Gill S.R."/>
            <person name="Pop M."/>
            <person name="Holmes M."/>
            <person name="Brinkac L.M."/>
            <person name="Beanan M.J."/>
            <person name="DeBoy R.T."/>
            <person name="Daugherty S.C."/>
            <person name="Kolonay J.F."/>
            <person name="Madupu R."/>
            <person name="Nelson W.C."/>
            <person name="White O."/>
            <person name="Peterson J.D."/>
            <person name="Khouri H.M."/>
            <person name="Hance I."/>
            <person name="Chris Lee P."/>
            <person name="Holtzapple E.K."/>
            <person name="Scanlan D."/>
            <person name="Tran K."/>
            <person name="Moazzez A."/>
            <person name="Utterback T.R."/>
            <person name="Rizzo M."/>
            <person name="Lee K."/>
            <person name="Kosack D."/>
            <person name="Moestl D."/>
            <person name="Wedler H."/>
            <person name="Lauber J."/>
            <person name="Stjepandic D."/>
            <person name="Hoheisel J."/>
            <person name="Straetz M."/>
            <person name="Heim S."/>
            <person name="Kiewitz C."/>
            <person name="Eisen J.A."/>
            <person name="Timmis K.N."/>
            <person name="Duesterhoeft A."/>
            <person name="Tuemmler B."/>
            <person name="Fraser C.M."/>
        </authorList>
    </citation>
    <scope>NUCLEOTIDE SEQUENCE [LARGE SCALE GENOMIC DNA]</scope>
    <source>
        <strain>ATCC 47054 / DSM 6125 / CFBP 8728 / NCIMB 11950 / KT2440</strain>
    </source>
</reference>
<proteinExistence type="inferred from homology"/>
<protein>
    <recommendedName>
        <fullName evidence="1">UDP-3-O-acylglucosamine N-acyltransferase</fullName>
        <ecNumber evidence="1">2.3.1.191</ecNumber>
    </recommendedName>
</protein>
<comment type="function">
    <text evidence="1">Catalyzes the N-acylation of UDP-3-O-acylglucosamine using 3-hydroxyacyl-ACP as the acyl donor. Is involved in the biosynthesis of lipid A, a phosphorylated glycolipid that anchors the lipopolysaccharide to the outer membrane of the cell.</text>
</comment>
<comment type="catalytic activity">
    <reaction evidence="1">
        <text>a UDP-3-O-[(3R)-3-hydroxyacyl]-alpha-D-glucosamine + a (3R)-hydroxyacyl-[ACP] = a UDP-2-N,3-O-bis[(3R)-3-hydroxyacyl]-alpha-D-glucosamine + holo-[ACP] + H(+)</text>
        <dbReference type="Rhea" id="RHEA:53836"/>
        <dbReference type="Rhea" id="RHEA-COMP:9685"/>
        <dbReference type="Rhea" id="RHEA-COMP:9945"/>
        <dbReference type="ChEBI" id="CHEBI:15378"/>
        <dbReference type="ChEBI" id="CHEBI:64479"/>
        <dbReference type="ChEBI" id="CHEBI:78827"/>
        <dbReference type="ChEBI" id="CHEBI:137740"/>
        <dbReference type="ChEBI" id="CHEBI:137748"/>
        <dbReference type="EC" id="2.3.1.191"/>
    </reaction>
</comment>
<comment type="pathway">
    <text evidence="1">Bacterial outer membrane biogenesis; LPS lipid A biosynthesis.</text>
</comment>
<comment type="subunit">
    <text evidence="1">Homotrimer.</text>
</comment>
<comment type="similarity">
    <text evidence="1">Belongs to the transferase hexapeptide repeat family. LpxD subfamily.</text>
</comment>